<comment type="function">
    <text evidence="1">Catalyzes the reductive methylation of 2'-deoxyuridine-5'-monophosphate (dUMP) to 2'-deoxythymidine-5'-monophosphate (dTMP) while utilizing 5,10-methylenetetrahydrofolate (mTHF) as the methyl donor and reductant in the reaction, yielding dihydrofolate (DHF) as a by-product. This enzymatic reaction provides an intracellular de novo source of dTMP, an essential precursor for DNA biosynthesis.</text>
</comment>
<comment type="catalytic activity">
    <reaction evidence="1">
        <text>dUMP + (6R)-5,10-methylene-5,6,7,8-tetrahydrofolate = 7,8-dihydrofolate + dTMP</text>
        <dbReference type="Rhea" id="RHEA:12104"/>
        <dbReference type="ChEBI" id="CHEBI:15636"/>
        <dbReference type="ChEBI" id="CHEBI:57451"/>
        <dbReference type="ChEBI" id="CHEBI:63528"/>
        <dbReference type="ChEBI" id="CHEBI:246422"/>
        <dbReference type="EC" id="2.1.1.45"/>
    </reaction>
</comment>
<comment type="pathway">
    <text evidence="1">Pyrimidine metabolism; dTTP biosynthesis.</text>
</comment>
<comment type="subunit">
    <text evidence="1">Homodimer.</text>
</comment>
<comment type="subcellular location">
    <subcellularLocation>
        <location evidence="1">Cytoplasm</location>
    </subcellularLocation>
</comment>
<comment type="similarity">
    <text evidence="1">Belongs to the thymidylate synthase family. Bacterial-type ThyA subfamily.</text>
</comment>
<name>TYSY_HAEIG</name>
<evidence type="ECO:0000255" key="1">
    <source>
        <dbReference type="HAMAP-Rule" id="MF_00008"/>
    </source>
</evidence>
<protein>
    <recommendedName>
        <fullName evidence="1">Thymidylate synthase</fullName>
        <shortName evidence="1">TS</shortName>
        <shortName evidence="1">TSase</shortName>
        <ecNumber evidence="1">2.1.1.45</ecNumber>
    </recommendedName>
</protein>
<accession>A5UI47</accession>
<organism>
    <name type="scientific">Haemophilus influenzae (strain PittGG)</name>
    <dbReference type="NCBI Taxonomy" id="374931"/>
    <lineage>
        <taxon>Bacteria</taxon>
        <taxon>Pseudomonadati</taxon>
        <taxon>Pseudomonadota</taxon>
        <taxon>Gammaproteobacteria</taxon>
        <taxon>Pasteurellales</taxon>
        <taxon>Pasteurellaceae</taxon>
        <taxon>Haemophilus</taxon>
    </lineage>
</organism>
<sequence>MKQYLELCRRIVSEGEWVANERTGKRCLTVINADLEYDVANNQFPLITTRKSYWKAAIAEFLGYIRGYDNAADFRELGTKTWDANANENAAWLANPHRRGVDDMGRVYGVQGRAWRKPNGETIDQLRKIVNNLTKGIDDRGEILTFFNPGEFDLGCLRPCMHTHTFSLVGDTLHLTSYQRSCDVPLGLNFNQIQVFTFLALMAQITGKKAGKAYHKIVNAHIYEDQLELMRDVQLKREPFPLPKLEINPDIKTLEDLETWVTMDDFKVVGYQSHEPIKYPFSV</sequence>
<proteinExistence type="inferred from homology"/>
<reference key="1">
    <citation type="journal article" date="2007" name="Genome Biol.">
        <title>Characterization and modeling of the Haemophilus influenzae core and supragenomes based on the complete genomic sequences of Rd and 12 clinical nontypeable strains.</title>
        <authorList>
            <person name="Hogg J.S."/>
            <person name="Hu F.Z."/>
            <person name="Janto B."/>
            <person name="Boissy R."/>
            <person name="Hayes J."/>
            <person name="Keefe R."/>
            <person name="Post J.C."/>
            <person name="Ehrlich G.D."/>
        </authorList>
    </citation>
    <scope>NUCLEOTIDE SEQUENCE [LARGE SCALE GENOMIC DNA]</scope>
    <source>
        <strain>PittGG</strain>
    </source>
</reference>
<keyword id="KW-0963">Cytoplasm</keyword>
<keyword id="KW-0489">Methyltransferase</keyword>
<keyword id="KW-0545">Nucleotide biosynthesis</keyword>
<keyword id="KW-0808">Transferase</keyword>
<dbReference type="EC" id="2.1.1.45" evidence="1"/>
<dbReference type="EMBL" id="CP000672">
    <property type="protein sequence ID" value="ABR00453.1"/>
    <property type="molecule type" value="Genomic_DNA"/>
</dbReference>
<dbReference type="SMR" id="A5UI47"/>
<dbReference type="KEGG" id="hiq:CGSHiGG_08085"/>
<dbReference type="HOGENOM" id="CLU_021669_0_1_6"/>
<dbReference type="UniPathway" id="UPA00575"/>
<dbReference type="Proteomes" id="UP000001990">
    <property type="component" value="Chromosome"/>
</dbReference>
<dbReference type="GO" id="GO:0005829">
    <property type="term" value="C:cytosol"/>
    <property type="evidence" value="ECO:0007669"/>
    <property type="project" value="TreeGrafter"/>
</dbReference>
<dbReference type="GO" id="GO:0004799">
    <property type="term" value="F:thymidylate synthase activity"/>
    <property type="evidence" value="ECO:0007669"/>
    <property type="project" value="UniProtKB-UniRule"/>
</dbReference>
<dbReference type="GO" id="GO:0006231">
    <property type="term" value="P:dTMP biosynthetic process"/>
    <property type="evidence" value="ECO:0007669"/>
    <property type="project" value="UniProtKB-UniRule"/>
</dbReference>
<dbReference type="GO" id="GO:0006235">
    <property type="term" value="P:dTTP biosynthetic process"/>
    <property type="evidence" value="ECO:0007669"/>
    <property type="project" value="UniProtKB-UniRule"/>
</dbReference>
<dbReference type="GO" id="GO:0032259">
    <property type="term" value="P:methylation"/>
    <property type="evidence" value="ECO:0007669"/>
    <property type="project" value="UniProtKB-KW"/>
</dbReference>
<dbReference type="CDD" id="cd00351">
    <property type="entry name" value="TS_Pyrimidine_HMase"/>
    <property type="match status" value="1"/>
</dbReference>
<dbReference type="FunFam" id="3.30.572.10:FF:000003">
    <property type="entry name" value="Thymidylate synthase"/>
    <property type="match status" value="1"/>
</dbReference>
<dbReference type="Gene3D" id="3.30.572.10">
    <property type="entry name" value="Thymidylate synthase/dCMP hydroxymethylase domain"/>
    <property type="match status" value="1"/>
</dbReference>
<dbReference type="HAMAP" id="MF_00008">
    <property type="entry name" value="Thymidy_synth_bact"/>
    <property type="match status" value="1"/>
</dbReference>
<dbReference type="InterPro" id="IPR045097">
    <property type="entry name" value="Thymidate_synth/dCMP_Mease"/>
</dbReference>
<dbReference type="InterPro" id="IPR023451">
    <property type="entry name" value="Thymidate_synth/dCMP_Mease_dom"/>
</dbReference>
<dbReference type="InterPro" id="IPR036926">
    <property type="entry name" value="Thymidate_synth/dCMP_Mease_sf"/>
</dbReference>
<dbReference type="InterPro" id="IPR000398">
    <property type="entry name" value="Thymidylate_synthase"/>
</dbReference>
<dbReference type="InterPro" id="IPR020940">
    <property type="entry name" value="Thymidylate_synthase_AS"/>
</dbReference>
<dbReference type="NCBIfam" id="NF002498">
    <property type="entry name" value="PRK01827.1-4"/>
    <property type="match status" value="1"/>
</dbReference>
<dbReference type="NCBIfam" id="TIGR03284">
    <property type="entry name" value="thym_sym"/>
    <property type="match status" value="1"/>
</dbReference>
<dbReference type="PANTHER" id="PTHR11548:SF9">
    <property type="entry name" value="THYMIDYLATE SYNTHASE"/>
    <property type="match status" value="1"/>
</dbReference>
<dbReference type="PANTHER" id="PTHR11548">
    <property type="entry name" value="THYMIDYLATE SYNTHASE 1"/>
    <property type="match status" value="1"/>
</dbReference>
<dbReference type="Pfam" id="PF00303">
    <property type="entry name" value="Thymidylat_synt"/>
    <property type="match status" value="1"/>
</dbReference>
<dbReference type="PRINTS" id="PR00108">
    <property type="entry name" value="THYMDSNTHASE"/>
</dbReference>
<dbReference type="SUPFAM" id="SSF55831">
    <property type="entry name" value="Thymidylate synthase/dCMP hydroxymethylase"/>
    <property type="match status" value="1"/>
</dbReference>
<dbReference type="PROSITE" id="PS00091">
    <property type="entry name" value="THYMIDYLATE_SYNTHASE"/>
    <property type="match status" value="1"/>
</dbReference>
<gene>
    <name evidence="1" type="primary">thyA</name>
    <name type="ordered locus">CGSHiGG_08085</name>
</gene>
<feature type="chain" id="PRO_1000000606" description="Thymidylate synthase">
    <location>
        <begin position="1"/>
        <end position="283"/>
    </location>
</feature>
<feature type="active site" description="Nucleophile" evidence="1">
    <location>
        <position position="160"/>
    </location>
</feature>
<feature type="binding site" evidence="1">
    <location>
        <position position="22"/>
    </location>
    <ligand>
        <name>dUMP</name>
        <dbReference type="ChEBI" id="CHEBI:246422"/>
    </ligand>
</feature>
<feature type="binding site" evidence="1">
    <location>
        <begin position="180"/>
        <end position="183"/>
    </location>
    <ligand>
        <name>dUMP</name>
        <dbReference type="ChEBI" id="CHEBI:246422"/>
    </ligand>
</feature>
<feature type="binding site" evidence="1">
    <location>
        <position position="183"/>
    </location>
    <ligand>
        <name>(6R)-5,10-methylene-5,6,7,8-tetrahydrofolate</name>
        <dbReference type="ChEBI" id="CHEBI:15636"/>
    </ligand>
</feature>
<feature type="binding site" evidence="1">
    <location>
        <position position="191"/>
    </location>
    <ligand>
        <name>dUMP</name>
        <dbReference type="ChEBI" id="CHEBI:246422"/>
    </ligand>
</feature>
<feature type="binding site" evidence="1">
    <location>
        <begin position="221"/>
        <end position="223"/>
    </location>
    <ligand>
        <name>dUMP</name>
        <dbReference type="ChEBI" id="CHEBI:246422"/>
    </ligand>
</feature>
<feature type="binding site" evidence="1">
    <location>
        <position position="282"/>
    </location>
    <ligand>
        <name>(6R)-5,10-methylene-5,6,7,8-tetrahydrofolate</name>
        <dbReference type="ChEBI" id="CHEBI:15636"/>
    </ligand>
</feature>